<keyword id="KW-1185">Reference proteome</keyword>
<keyword id="KW-0687">Ribonucleoprotein</keyword>
<keyword id="KW-0689">Ribosomal protein</keyword>
<keyword id="KW-0694">RNA-binding</keyword>
<keyword id="KW-0699">rRNA-binding</keyword>
<dbReference type="EMBL" id="AM233362">
    <property type="protein sequence ID" value="CAJ79464.1"/>
    <property type="molecule type" value="Genomic_DNA"/>
</dbReference>
<dbReference type="RefSeq" id="WP_003015901.1">
    <property type="nucleotide sequence ID" value="NZ_CP009694.1"/>
</dbReference>
<dbReference type="SMR" id="Q2A3H6"/>
<dbReference type="KEGG" id="ftl:FTL_1025"/>
<dbReference type="Proteomes" id="UP000001944">
    <property type="component" value="Chromosome"/>
</dbReference>
<dbReference type="GO" id="GO:0022627">
    <property type="term" value="C:cytosolic small ribosomal subunit"/>
    <property type="evidence" value="ECO:0007669"/>
    <property type="project" value="TreeGrafter"/>
</dbReference>
<dbReference type="GO" id="GO:0070181">
    <property type="term" value="F:small ribosomal subunit rRNA binding"/>
    <property type="evidence" value="ECO:0007669"/>
    <property type="project" value="TreeGrafter"/>
</dbReference>
<dbReference type="GO" id="GO:0003735">
    <property type="term" value="F:structural constituent of ribosome"/>
    <property type="evidence" value="ECO:0007669"/>
    <property type="project" value="InterPro"/>
</dbReference>
<dbReference type="GO" id="GO:0006412">
    <property type="term" value="P:translation"/>
    <property type="evidence" value="ECO:0007669"/>
    <property type="project" value="UniProtKB-UniRule"/>
</dbReference>
<dbReference type="Gene3D" id="4.10.640.10">
    <property type="entry name" value="Ribosomal protein S18"/>
    <property type="match status" value="1"/>
</dbReference>
<dbReference type="HAMAP" id="MF_00270">
    <property type="entry name" value="Ribosomal_bS18"/>
    <property type="match status" value="1"/>
</dbReference>
<dbReference type="InterPro" id="IPR001648">
    <property type="entry name" value="Ribosomal_bS18"/>
</dbReference>
<dbReference type="InterPro" id="IPR018275">
    <property type="entry name" value="Ribosomal_bS18_CS"/>
</dbReference>
<dbReference type="InterPro" id="IPR036870">
    <property type="entry name" value="Ribosomal_bS18_sf"/>
</dbReference>
<dbReference type="NCBIfam" id="TIGR00165">
    <property type="entry name" value="S18"/>
    <property type="match status" value="1"/>
</dbReference>
<dbReference type="PANTHER" id="PTHR13479">
    <property type="entry name" value="30S RIBOSOMAL PROTEIN S18"/>
    <property type="match status" value="1"/>
</dbReference>
<dbReference type="PANTHER" id="PTHR13479:SF40">
    <property type="entry name" value="SMALL RIBOSOMAL SUBUNIT PROTEIN BS18M"/>
    <property type="match status" value="1"/>
</dbReference>
<dbReference type="Pfam" id="PF01084">
    <property type="entry name" value="Ribosomal_S18"/>
    <property type="match status" value="1"/>
</dbReference>
<dbReference type="PRINTS" id="PR00974">
    <property type="entry name" value="RIBOSOMALS18"/>
</dbReference>
<dbReference type="SUPFAM" id="SSF46911">
    <property type="entry name" value="Ribosomal protein S18"/>
    <property type="match status" value="1"/>
</dbReference>
<dbReference type="PROSITE" id="PS00057">
    <property type="entry name" value="RIBOSOMAL_S18"/>
    <property type="match status" value="1"/>
</dbReference>
<protein>
    <recommendedName>
        <fullName evidence="1">Small ribosomal subunit protein bS18</fullName>
    </recommendedName>
    <alternativeName>
        <fullName evidence="2">30S ribosomal protein S18</fullName>
    </alternativeName>
</protein>
<accession>Q2A3H6</accession>
<comment type="function">
    <text evidence="1">Binds as a heterodimer with protein bS6 to the central domain of the 16S rRNA, where it helps stabilize the platform of the 30S subunit.</text>
</comment>
<comment type="subunit">
    <text evidence="1">Part of the 30S ribosomal subunit. Forms a tight heterodimer with protein bS6.</text>
</comment>
<comment type="similarity">
    <text evidence="1">Belongs to the bacterial ribosomal protein bS18 family.</text>
</comment>
<gene>
    <name evidence="1" type="primary">rpsR</name>
    <name type="ordered locus">FTL_1025</name>
</gene>
<reference key="1">
    <citation type="submission" date="2006-03" db="EMBL/GenBank/DDBJ databases">
        <title>Complete genome sequence of Francisella tularensis LVS (Live Vaccine Strain).</title>
        <authorList>
            <person name="Chain P."/>
            <person name="Larimer F."/>
            <person name="Land M."/>
            <person name="Stilwagen S."/>
            <person name="Larsson P."/>
            <person name="Bearden S."/>
            <person name="Chu M."/>
            <person name="Oyston P."/>
            <person name="Forsman M."/>
            <person name="Andersson S."/>
            <person name="Lindler L."/>
            <person name="Titball R."/>
            <person name="Garcia E."/>
        </authorList>
    </citation>
    <scope>NUCLEOTIDE SEQUENCE [LARGE SCALE GENOMIC DNA]</scope>
    <source>
        <strain>LVS</strain>
    </source>
</reference>
<sequence length="72" mass="8379">MSRRKVCRFTIEGVKEIDYKDVNKLKAYINETGKIVPSRVTGTSAKYQRQLATAIKRARFLALLPYCDRHFN</sequence>
<name>RS18_FRATH</name>
<evidence type="ECO:0000255" key="1">
    <source>
        <dbReference type="HAMAP-Rule" id="MF_00270"/>
    </source>
</evidence>
<evidence type="ECO:0000305" key="2"/>
<proteinExistence type="inferred from homology"/>
<organism>
    <name type="scientific">Francisella tularensis subsp. holarctica (strain LVS)</name>
    <dbReference type="NCBI Taxonomy" id="376619"/>
    <lineage>
        <taxon>Bacteria</taxon>
        <taxon>Pseudomonadati</taxon>
        <taxon>Pseudomonadota</taxon>
        <taxon>Gammaproteobacteria</taxon>
        <taxon>Thiotrichales</taxon>
        <taxon>Francisellaceae</taxon>
        <taxon>Francisella</taxon>
    </lineage>
</organism>
<feature type="chain" id="PRO_0000345471" description="Small ribosomal subunit protein bS18">
    <location>
        <begin position="1"/>
        <end position="72"/>
    </location>
</feature>